<reference key="1">
    <citation type="submission" date="2003-10" db="EMBL/GenBank/DDBJ databases">
        <title>The complete genome sequence of the alkaliphilic Bacillus clausii KSM-K16.</title>
        <authorList>
            <person name="Takaki Y."/>
            <person name="Kageyama Y."/>
            <person name="Shimamura S."/>
            <person name="Suzuki H."/>
            <person name="Nishi S."/>
            <person name="Hatada Y."/>
            <person name="Kawai S."/>
            <person name="Ito S."/>
            <person name="Horikoshi K."/>
        </authorList>
    </citation>
    <scope>NUCLEOTIDE SEQUENCE [LARGE SCALE GENOMIC DNA]</scope>
    <source>
        <strain>KSM-K16</strain>
    </source>
</reference>
<protein>
    <recommendedName>
        <fullName evidence="1">Large ribosomal subunit protein bL33A</fullName>
    </recommendedName>
    <alternativeName>
        <fullName evidence="1">50S ribosomal protein L33 1</fullName>
    </alternativeName>
</protein>
<gene>
    <name evidence="1" type="primary">rpmG1</name>
    <name type="ordered locus">ABC0134</name>
</gene>
<name>RL331_SHOC1</name>
<evidence type="ECO:0000255" key="1">
    <source>
        <dbReference type="HAMAP-Rule" id="MF_00294"/>
    </source>
</evidence>
<organism>
    <name type="scientific">Shouchella clausii (strain KSM-K16)</name>
    <name type="common">Alkalihalobacillus clausii</name>
    <dbReference type="NCBI Taxonomy" id="66692"/>
    <lineage>
        <taxon>Bacteria</taxon>
        <taxon>Bacillati</taxon>
        <taxon>Bacillota</taxon>
        <taxon>Bacilli</taxon>
        <taxon>Bacillales</taxon>
        <taxon>Bacillaceae</taxon>
        <taxon>Shouchella</taxon>
    </lineage>
</organism>
<keyword id="KW-1185">Reference proteome</keyword>
<keyword id="KW-0687">Ribonucleoprotein</keyword>
<keyword id="KW-0689">Ribosomal protein</keyword>
<dbReference type="EMBL" id="AP006627">
    <property type="protein sequence ID" value="BAD62677.1"/>
    <property type="molecule type" value="Genomic_DNA"/>
</dbReference>
<dbReference type="SMR" id="Q5WLS8"/>
<dbReference type="STRING" id="66692.ABC0134"/>
<dbReference type="KEGG" id="bcl:ABC0134"/>
<dbReference type="HOGENOM" id="CLU_190949_0_1_9"/>
<dbReference type="OrthoDB" id="9801333at2"/>
<dbReference type="Proteomes" id="UP000001168">
    <property type="component" value="Chromosome"/>
</dbReference>
<dbReference type="GO" id="GO:0005737">
    <property type="term" value="C:cytoplasm"/>
    <property type="evidence" value="ECO:0007669"/>
    <property type="project" value="UniProtKB-ARBA"/>
</dbReference>
<dbReference type="GO" id="GO:1990904">
    <property type="term" value="C:ribonucleoprotein complex"/>
    <property type="evidence" value="ECO:0007669"/>
    <property type="project" value="UniProtKB-KW"/>
</dbReference>
<dbReference type="GO" id="GO:0005840">
    <property type="term" value="C:ribosome"/>
    <property type="evidence" value="ECO:0007669"/>
    <property type="project" value="UniProtKB-KW"/>
</dbReference>
<dbReference type="GO" id="GO:0003735">
    <property type="term" value="F:structural constituent of ribosome"/>
    <property type="evidence" value="ECO:0007669"/>
    <property type="project" value="InterPro"/>
</dbReference>
<dbReference type="GO" id="GO:0006412">
    <property type="term" value="P:translation"/>
    <property type="evidence" value="ECO:0007669"/>
    <property type="project" value="UniProtKB-UniRule"/>
</dbReference>
<dbReference type="Gene3D" id="2.20.28.120">
    <property type="entry name" value="Ribosomal protein L33"/>
    <property type="match status" value="1"/>
</dbReference>
<dbReference type="HAMAP" id="MF_00294">
    <property type="entry name" value="Ribosomal_bL33"/>
    <property type="match status" value="1"/>
</dbReference>
<dbReference type="InterPro" id="IPR001705">
    <property type="entry name" value="Ribosomal_bL33"/>
</dbReference>
<dbReference type="InterPro" id="IPR038584">
    <property type="entry name" value="Ribosomal_bL33_sf"/>
</dbReference>
<dbReference type="InterPro" id="IPR011332">
    <property type="entry name" value="Ribosomal_zn-bd"/>
</dbReference>
<dbReference type="NCBIfam" id="NF001764">
    <property type="entry name" value="PRK00504.1"/>
    <property type="match status" value="1"/>
</dbReference>
<dbReference type="NCBIfam" id="TIGR01023">
    <property type="entry name" value="rpmG_bact"/>
    <property type="match status" value="1"/>
</dbReference>
<dbReference type="Pfam" id="PF00471">
    <property type="entry name" value="Ribosomal_L33"/>
    <property type="match status" value="1"/>
</dbReference>
<dbReference type="SUPFAM" id="SSF57829">
    <property type="entry name" value="Zn-binding ribosomal proteins"/>
    <property type="match status" value="1"/>
</dbReference>
<proteinExistence type="inferred from homology"/>
<sequence length="48" mass="5458">MSGKRVLACDICKSRNYSVTSAKKSDTRLTVKKFCKRCNGHTLHVETR</sequence>
<accession>Q5WLS8</accession>
<feature type="chain" id="PRO_0000356390" description="Large ribosomal subunit protein bL33A">
    <location>
        <begin position="1"/>
        <end position="48"/>
    </location>
</feature>
<comment type="similarity">
    <text evidence="1">Belongs to the bacterial ribosomal protein bL33 family.</text>
</comment>